<keyword id="KW-0539">Nucleus</keyword>
<keyword id="KW-1185">Reference proteome</keyword>
<keyword id="KW-0690">Ribosome biogenesis</keyword>
<keyword id="KW-0694">RNA-binding</keyword>
<keyword id="KW-0698">rRNA processing</keyword>
<organism>
    <name type="scientific">Dictyostelium discoideum</name>
    <name type="common">Social amoeba</name>
    <dbReference type="NCBI Taxonomy" id="44689"/>
    <lineage>
        <taxon>Eukaryota</taxon>
        <taxon>Amoebozoa</taxon>
        <taxon>Evosea</taxon>
        <taxon>Eumycetozoa</taxon>
        <taxon>Dictyostelia</taxon>
        <taxon>Dictyosteliales</taxon>
        <taxon>Dictyosteliaceae</taxon>
        <taxon>Dictyostelium</taxon>
    </lineage>
</organism>
<gene>
    <name type="primary">esf2</name>
    <name type="ORF">DDB_G0293576</name>
</gene>
<dbReference type="EMBL" id="AAFI02000218">
    <property type="protein sequence ID" value="EAL60600.1"/>
    <property type="molecule type" value="Genomic_DNA"/>
</dbReference>
<dbReference type="RefSeq" id="XP_629017.1">
    <property type="nucleotide sequence ID" value="XM_629015.1"/>
</dbReference>
<dbReference type="SMR" id="Q54BL2"/>
<dbReference type="FunCoup" id="Q54BL2">
    <property type="interactions" value="427"/>
</dbReference>
<dbReference type="STRING" id="44689.Q54BL2"/>
<dbReference type="PaxDb" id="44689-DDB0266368"/>
<dbReference type="EnsemblProtists" id="EAL60600">
    <property type="protein sequence ID" value="EAL60600"/>
    <property type="gene ID" value="DDB_G0293576"/>
</dbReference>
<dbReference type="GeneID" id="8629301"/>
<dbReference type="KEGG" id="ddi:DDB_G0293576"/>
<dbReference type="dictyBase" id="DDB_G0293576">
    <property type="gene designation" value="esf2"/>
</dbReference>
<dbReference type="VEuPathDB" id="AmoebaDB:DDB_G0293576"/>
<dbReference type="eggNOG" id="KOG3152">
    <property type="taxonomic scope" value="Eukaryota"/>
</dbReference>
<dbReference type="HOGENOM" id="CLU_941432_0_0_1"/>
<dbReference type="InParanoid" id="Q54BL2"/>
<dbReference type="OMA" id="TRKHNDF"/>
<dbReference type="PhylomeDB" id="Q54BL2"/>
<dbReference type="PRO" id="PR:Q54BL2"/>
<dbReference type="Proteomes" id="UP000002195">
    <property type="component" value="Chromosome 6"/>
</dbReference>
<dbReference type="GO" id="GO:0005730">
    <property type="term" value="C:nucleolus"/>
    <property type="evidence" value="ECO:0000318"/>
    <property type="project" value="GO_Central"/>
</dbReference>
<dbReference type="GO" id="GO:0003723">
    <property type="term" value="F:RNA binding"/>
    <property type="evidence" value="ECO:0000318"/>
    <property type="project" value="GO_Central"/>
</dbReference>
<dbReference type="GO" id="GO:0000480">
    <property type="term" value="P:endonucleolytic cleavage in 5'-ETS of tricistronic rRNA transcript (SSU-rRNA, 5.8S rRNA, LSU-rRNA)"/>
    <property type="evidence" value="ECO:0000318"/>
    <property type="project" value="GO_Central"/>
</dbReference>
<dbReference type="GO" id="GO:0000447">
    <property type="term" value="P:endonucleolytic cleavage in ITS1 to separate SSU-rRNA from 5.8S rRNA and LSU-rRNA from tricistronic rRNA transcript (SSU-rRNA, 5.8S rRNA, LSU-rRNA)"/>
    <property type="evidence" value="ECO:0000318"/>
    <property type="project" value="GO_Central"/>
</dbReference>
<dbReference type="GO" id="GO:0000472">
    <property type="term" value="P:endonucleolytic cleavage to generate mature 5'-end of SSU-rRNA from (SSU-rRNA, 5.8S rRNA, LSU-rRNA)"/>
    <property type="evidence" value="ECO:0000318"/>
    <property type="project" value="GO_Central"/>
</dbReference>
<dbReference type="GO" id="GO:0034462">
    <property type="term" value="P:small-subunit processome assembly"/>
    <property type="evidence" value="ECO:0000318"/>
    <property type="project" value="GO_Central"/>
</dbReference>
<dbReference type="CDD" id="cd12263">
    <property type="entry name" value="RRM_ABT1_like"/>
    <property type="match status" value="1"/>
</dbReference>
<dbReference type="FunFam" id="3.30.70.330:FF:001804">
    <property type="match status" value="1"/>
</dbReference>
<dbReference type="Gene3D" id="3.30.70.330">
    <property type="match status" value="1"/>
</dbReference>
<dbReference type="InterPro" id="IPR039119">
    <property type="entry name" value="ABT1/Esf2"/>
</dbReference>
<dbReference type="InterPro" id="IPR034353">
    <property type="entry name" value="ABT1/ESF2_RRM"/>
</dbReference>
<dbReference type="InterPro" id="IPR012677">
    <property type="entry name" value="Nucleotide-bd_a/b_plait_sf"/>
</dbReference>
<dbReference type="InterPro" id="IPR035979">
    <property type="entry name" value="RBD_domain_sf"/>
</dbReference>
<dbReference type="InterPro" id="IPR000504">
    <property type="entry name" value="RRM_dom"/>
</dbReference>
<dbReference type="PANTHER" id="PTHR12311">
    <property type="entry name" value="ACTIVATOR OF BASAL TRANSCRIPTION 1"/>
    <property type="match status" value="1"/>
</dbReference>
<dbReference type="PANTHER" id="PTHR12311:SF7">
    <property type="entry name" value="ACTIVATOR OF BASAL TRANSCRIPTION 1"/>
    <property type="match status" value="1"/>
</dbReference>
<dbReference type="Pfam" id="PF00076">
    <property type="entry name" value="RRM_1"/>
    <property type="match status" value="1"/>
</dbReference>
<dbReference type="SUPFAM" id="SSF54928">
    <property type="entry name" value="RNA-binding domain, RBD"/>
    <property type="match status" value="1"/>
</dbReference>
<dbReference type="PROSITE" id="PS50102">
    <property type="entry name" value="RRM"/>
    <property type="match status" value="1"/>
</dbReference>
<accession>Q54BL2</accession>
<comment type="function">
    <text evidence="1">May be involved in the small subunit (SSU) processome assembly and function, and in the 17S rRNA synthesis.</text>
</comment>
<comment type="subunit">
    <text evidence="1">Component of the 90S pre-ribosomes.</text>
</comment>
<comment type="subcellular location">
    <subcellularLocation>
        <location evidence="1">Nucleus</location>
        <location evidence="1">Nucleolus</location>
    </subcellularLocation>
</comment>
<comment type="similarity">
    <text evidence="4">Belongs to the ESF2/ABP1 family.</text>
</comment>
<evidence type="ECO:0000250" key="1"/>
<evidence type="ECO:0000255" key="2">
    <source>
        <dbReference type="PROSITE-ProRule" id="PRU00176"/>
    </source>
</evidence>
<evidence type="ECO:0000256" key="3">
    <source>
        <dbReference type="SAM" id="MobiDB-lite"/>
    </source>
</evidence>
<evidence type="ECO:0000305" key="4"/>
<sequence>MAQKRKNDKIETSKKEEIDPRFVNKFEDLEENDFKDDDEDDFINDVNEGEEEEEEEDNEDNIEFNQEEDDEDEDDEENKDNKNKIKKVIKIKPMDIEKMKKLKEQNENKGIIYLSTIPSRMKPAKLKQLLAKYGKVTRMHLVRANVERKNHRNDMFKEGWIEFEDKALARKIATILNNIPMGGKARDIHKDCLWNLRYLPKFKWHHLQDKLVSQRMERDKKLRLEINQVRKQNLILLEQVELSKHVNQKHESKGKPIKEKVVRTFKQRSSHEDSLNSNISSKVLEKVVSNKKQKIN</sequence>
<protein>
    <recommendedName>
        <fullName>Putative pre-rRNA-processing protein esf2</fullName>
    </recommendedName>
</protein>
<reference key="1">
    <citation type="journal article" date="2005" name="Nature">
        <title>The genome of the social amoeba Dictyostelium discoideum.</title>
        <authorList>
            <person name="Eichinger L."/>
            <person name="Pachebat J.A."/>
            <person name="Gloeckner G."/>
            <person name="Rajandream M.A."/>
            <person name="Sucgang R."/>
            <person name="Berriman M."/>
            <person name="Song J."/>
            <person name="Olsen R."/>
            <person name="Szafranski K."/>
            <person name="Xu Q."/>
            <person name="Tunggal B."/>
            <person name="Kummerfeld S."/>
            <person name="Madera M."/>
            <person name="Konfortov B.A."/>
            <person name="Rivero F."/>
            <person name="Bankier A.T."/>
            <person name="Lehmann R."/>
            <person name="Hamlin N."/>
            <person name="Davies R."/>
            <person name="Gaudet P."/>
            <person name="Fey P."/>
            <person name="Pilcher K."/>
            <person name="Chen G."/>
            <person name="Saunders D."/>
            <person name="Sodergren E.J."/>
            <person name="Davis P."/>
            <person name="Kerhornou A."/>
            <person name="Nie X."/>
            <person name="Hall N."/>
            <person name="Anjard C."/>
            <person name="Hemphill L."/>
            <person name="Bason N."/>
            <person name="Farbrother P."/>
            <person name="Desany B."/>
            <person name="Just E."/>
            <person name="Morio T."/>
            <person name="Rost R."/>
            <person name="Churcher C.M."/>
            <person name="Cooper J."/>
            <person name="Haydock S."/>
            <person name="van Driessche N."/>
            <person name="Cronin A."/>
            <person name="Goodhead I."/>
            <person name="Muzny D.M."/>
            <person name="Mourier T."/>
            <person name="Pain A."/>
            <person name="Lu M."/>
            <person name="Harper D."/>
            <person name="Lindsay R."/>
            <person name="Hauser H."/>
            <person name="James K.D."/>
            <person name="Quiles M."/>
            <person name="Madan Babu M."/>
            <person name="Saito T."/>
            <person name="Buchrieser C."/>
            <person name="Wardroper A."/>
            <person name="Felder M."/>
            <person name="Thangavelu M."/>
            <person name="Johnson D."/>
            <person name="Knights A."/>
            <person name="Loulseged H."/>
            <person name="Mungall K.L."/>
            <person name="Oliver K."/>
            <person name="Price C."/>
            <person name="Quail M.A."/>
            <person name="Urushihara H."/>
            <person name="Hernandez J."/>
            <person name="Rabbinowitsch E."/>
            <person name="Steffen D."/>
            <person name="Sanders M."/>
            <person name="Ma J."/>
            <person name="Kohara Y."/>
            <person name="Sharp S."/>
            <person name="Simmonds M.N."/>
            <person name="Spiegler S."/>
            <person name="Tivey A."/>
            <person name="Sugano S."/>
            <person name="White B."/>
            <person name="Walker D."/>
            <person name="Woodward J.R."/>
            <person name="Winckler T."/>
            <person name="Tanaka Y."/>
            <person name="Shaulsky G."/>
            <person name="Schleicher M."/>
            <person name="Weinstock G.M."/>
            <person name="Rosenthal A."/>
            <person name="Cox E.C."/>
            <person name="Chisholm R.L."/>
            <person name="Gibbs R.A."/>
            <person name="Loomis W.F."/>
            <person name="Platzer M."/>
            <person name="Kay R.R."/>
            <person name="Williams J.G."/>
            <person name="Dear P.H."/>
            <person name="Noegel A.A."/>
            <person name="Barrell B.G."/>
            <person name="Kuspa A."/>
        </authorList>
    </citation>
    <scope>NUCLEOTIDE SEQUENCE [LARGE SCALE GENOMIC DNA]</scope>
    <source>
        <strain>AX4</strain>
    </source>
</reference>
<name>EFS2_DICDI</name>
<feature type="chain" id="PRO_0000327515" description="Putative pre-rRNA-processing protein esf2">
    <location>
        <begin position="1"/>
        <end position="296"/>
    </location>
</feature>
<feature type="domain" description="RRM" evidence="2">
    <location>
        <begin position="110"/>
        <end position="193"/>
    </location>
</feature>
<feature type="region of interest" description="Disordered" evidence="3">
    <location>
        <begin position="1"/>
        <end position="84"/>
    </location>
</feature>
<feature type="compositionally biased region" description="Basic and acidic residues" evidence="3">
    <location>
        <begin position="8"/>
        <end position="27"/>
    </location>
</feature>
<feature type="compositionally biased region" description="Acidic residues" evidence="3">
    <location>
        <begin position="28"/>
        <end position="78"/>
    </location>
</feature>
<proteinExistence type="inferred from homology"/>